<feature type="chain" id="PRO_0000395741" description="E3 ubiquitin-protein ligase XBAT33">
    <location>
        <begin position="1"/>
        <end position="513"/>
    </location>
</feature>
<feature type="repeat" description="ANK 1">
    <location>
        <begin position="44"/>
        <end position="73"/>
    </location>
</feature>
<feature type="repeat" description="ANK 2">
    <location>
        <begin position="77"/>
        <end position="106"/>
    </location>
</feature>
<feature type="repeat" description="ANK 3">
    <location>
        <begin position="111"/>
        <end position="140"/>
    </location>
</feature>
<feature type="repeat" description="ANK 4">
    <location>
        <begin position="171"/>
        <end position="200"/>
    </location>
</feature>
<feature type="repeat" description="ANK 5">
    <location>
        <begin position="214"/>
        <end position="244"/>
    </location>
</feature>
<feature type="zinc finger region" description="RING-type" evidence="1">
    <location>
        <begin position="312"/>
        <end position="362"/>
    </location>
</feature>
<feature type="region of interest" description="Disordered" evidence="2">
    <location>
        <begin position="397"/>
        <end position="417"/>
    </location>
</feature>
<feature type="region of interest" description="Disordered" evidence="2">
    <location>
        <begin position="455"/>
        <end position="483"/>
    </location>
</feature>
<feature type="compositionally biased region" description="Basic and acidic residues" evidence="2">
    <location>
        <begin position="455"/>
        <end position="466"/>
    </location>
</feature>
<feature type="compositionally biased region" description="Basic and acidic residues" evidence="2">
    <location>
        <begin position="474"/>
        <end position="483"/>
    </location>
</feature>
<dbReference type="EC" id="2.3.2.27"/>
<dbReference type="EMBL" id="DQ086846">
    <property type="protein sequence ID" value="AAZ14070.1"/>
    <property type="molecule type" value="mRNA"/>
</dbReference>
<dbReference type="EMBL" id="AL163652">
    <property type="protein sequence ID" value="CAB87283.1"/>
    <property type="status" value="ALT_SEQ"/>
    <property type="molecule type" value="Genomic_DNA"/>
</dbReference>
<dbReference type="EMBL" id="CP002688">
    <property type="protein sequence ID" value="AED91131.1"/>
    <property type="molecule type" value="Genomic_DNA"/>
</dbReference>
<dbReference type="EMBL" id="BT029297">
    <property type="protein sequence ID" value="ABK32111.1"/>
    <property type="molecule type" value="mRNA"/>
</dbReference>
<dbReference type="PIR" id="T48498">
    <property type="entry name" value="T48498"/>
</dbReference>
<dbReference type="RefSeq" id="NP_196344.2">
    <property type="nucleotide sequence ID" value="NM_120809.5"/>
</dbReference>
<dbReference type="SMR" id="Q4FE45"/>
<dbReference type="FunCoup" id="Q4FE45">
    <property type="interactions" value="1418"/>
</dbReference>
<dbReference type="STRING" id="3702.Q4FE45"/>
<dbReference type="iPTMnet" id="Q4FE45"/>
<dbReference type="PaxDb" id="3702-AT5G07270.1"/>
<dbReference type="ProteomicsDB" id="242454"/>
<dbReference type="EnsemblPlants" id="AT5G07270.1">
    <property type="protein sequence ID" value="AT5G07270.1"/>
    <property type="gene ID" value="AT5G07270"/>
</dbReference>
<dbReference type="GeneID" id="830618"/>
<dbReference type="Gramene" id="AT5G07270.1">
    <property type="protein sequence ID" value="AT5G07270.1"/>
    <property type="gene ID" value="AT5G07270"/>
</dbReference>
<dbReference type="KEGG" id="ath:AT5G07270"/>
<dbReference type="Araport" id="AT5G07270"/>
<dbReference type="TAIR" id="AT5G07270">
    <property type="gene designation" value="XBAT33"/>
</dbReference>
<dbReference type="eggNOG" id="ENOG502QR1Y">
    <property type="taxonomic scope" value="Eukaryota"/>
</dbReference>
<dbReference type="HOGENOM" id="CLU_035461_0_0_1"/>
<dbReference type="InParanoid" id="Q4FE45"/>
<dbReference type="OMA" id="CMLHSRD"/>
<dbReference type="OrthoDB" id="20872at2759"/>
<dbReference type="PhylomeDB" id="Q4FE45"/>
<dbReference type="UniPathway" id="UPA00143"/>
<dbReference type="PRO" id="PR:Q4FE45"/>
<dbReference type="Proteomes" id="UP000006548">
    <property type="component" value="Chromosome 5"/>
</dbReference>
<dbReference type="ExpressionAtlas" id="Q4FE45">
    <property type="expression patterns" value="baseline and differential"/>
</dbReference>
<dbReference type="GO" id="GO:0004842">
    <property type="term" value="F:ubiquitin-protein transferase activity"/>
    <property type="evidence" value="ECO:0000314"/>
    <property type="project" value="UniProtKB"/>
</dbReference>
<dbReference type="GO" id="GO:0008270">
    <property type="term" value="F:zinc ion binding"/>
    <property type="evidence" value="ECO:0007669"/>
    <property type="project" value="UniProtKB-KW"/>
</dbReference>
<dbReference type="GO" id="GO:0016567">
    <property type="term" value="P:protein ubiquitination"/>
    <property type="evidence" value="ECO:0000314"/>
    <property type="project" value="UniProtKB"/>
</dbReference>
<dbReference type="FunFam" id="1.25.40.20:FF:000506">
    <property type="entry name" value="E3 ubiquitin-protein ligase XBAT32"/>
    <property type="match status" value="1"/>
</dbReference>
<dbReference type="FunFam" id="1.25.40.20:FF:000262">
    <property type="entry name" value="E3 ubiquitin-protein ligase XBAT33"/>
    <property type="match status" value="1"/>
</dbReference>
<dbReference type="Gene3D" id="1.25.40.20">
    <property type="entry name" value="Ankyrin repeat-containing domain"/>
    <property type="match status" value="2"/>
</dbReference>
<dbReference type="Gene3D" id="3.30.40.10">
    <property type="entry name" value="Zinc/RING finger domain, C3HC4 (zinc finger)"/>
    <property type="match status" value="1"/>
</dbReference>
<dbReference type="InterPro" id="IPR002110">
    <property type="entry name" value="Ankyrin_rpt"/>
</dbReference>
<dbReference type="InterPro" id="IPR036770">
    <property type="entry name" value="Ankyrin_rpt-contain_sf"/>
</dbReference>
<dbReference type="InterPro" id="IPR056760">
    <property type="entry name" value="RING_XB3-like"/>
</dbReference>
<dbReference type="InterPro" id="IPR001841">
    <property type="entry name" value="Znf_RING"/>
</dbReference>
<dbReference type="InterPro" id="IPR013083">
    <property type="entry name" value="Znf_RING/FYVE/PHD"/>
</dbReference>
<dbReference type="InterPro" id="IPR017907">
    <property type="entry name" value="Znf_RING_CS"/>
</dbReference>
<dbReference type="PANTHER" id="PTHR24161">
    <property type="entry name" value="ANK_REP_REGION DOMAIN-CONTAINING PROTEIN-RELATED"/>
    <property type="match status" value="1"/>
</dbReference>
<dbReference type="PANTHER" id="PTHR24161:SF85">
    <property type="entry name" value="PALMITOYLTRANSFERASE HIP14"/>
    <property type="match status" value="1"/>
</dbReference>
<dbReference type="Pfam" id="PF12796">
    <property type="entry name" value="Ank_2"/>
    <property type="match status" value="2"/>
</dbReference>
<dbReference type="Pfam" id="PF24921">
    <property type="entry name" value="RING_XB3-XBAT31"/>
    <property type="match status" value="1"/>
</dbReference>
<dbReference type="SMART" id="SM00248">
    <property type="entry name" value="ANK"/>
    <property type="match status" value="5"/>
</dbReference>
<dbReference type="SUPFAM" id="SSF48403">
    <property type="entry name" value="Ankyrin repeat"/>
    <property type="match status" value="1"/>
</dbReference>
<dbReference type="SUPFAM" id="SSF57850">
    <property type="entry name" value="RING/U-box"/>
    <property type="match status" value="1"/>
</dbReference>
<dbReference type="PROSITE" id="PS50297">
    <property type="entry name" value="ANK_REP_REGION"/>
    <property type="match status" value="1"/>
</dbReference>
<dbReference type="PROSITE" id="PS50088">
    <property type="entry name" value="ANK_REPEAT"/>
    <property type="match status" value="4"/>
</dbReference>
<dbReference type="PROSITE" id="PS00518">
    <property type="entry name" value="ZF_RING_1"/>
    <property type="match status" value="1"/>
</dbReference>
<dbReference type="PROSITE" id="PS50089">
    <property type="entry name" value="ZF_RING_2"/>
    <property type="match status" value="1"/>
</dbReference>
<keyword id="KW-0040">ANK repeat</keyword>
<keyword id="KW-0479">Metal-binding</keyword>
<keyword id="KW-1185">Reference proteome</keyword>
<keyword id="KW-0677">Repeat</keyword>
<keyword id="KW-0808">Transferase</keyword>
<keyword id="KW-0833">Ubl conjugation pathway</keyword>
<keyword id="KW-0862">Zinc</keyword>
<keyword id="KW-0863">Zinc-finger</keyword>
<proteinExistence type="evidence at transcript level"/>
<gene>
    <name type="primary">XBAT33</name>
    <name type="ordered locus">At5g07270</name>
    <name type="ORF">T28J14.210</name>
</gene>
<name>XB33_ARATH</name>
<protein>
    <recommendedName>
        <fullName>E3 ubiquitin-protein ligase XBAT33</fullName>
        <ecNumber>2.3.2.27</ecNumber>
    </recommendedName>
    <alternativeName>
        <fullName>Ankyrin repeat domain and RING finger-containing protein XBAT33</fullName>
    </alternativeName>
    <alternativeName>
        <fullName>Protein XB3 homolog 3</fullName>
    </alternativeName>
    <alternativeName>
        <fullName>RING-type E3 ubiquitin transferase XBAT33</fullName>
    </alternativeName>
</protein>
<evidence type="ECO:0000255" key="1">
    <source>
        <dbReference type="PROSITE-ProRule" id="PRU00175"/>
    </source>
</evidence>
<evidence type="ECO:0000256" key="2">
    <source>
        <dbReference type="SAM" id="MobiDB-lite"/>
    </source>
</evidence>
<evidence type="ECO:0000269" key="3">
    <source>
    </source>
</evidence>
<evidence type="ECO:0000305" key="4"/>
<sequence length="513" mass="55347">MGNSFGCSASGERLVSAARDGDFVEAKMLLDCNPCLAKYSTFGGLNSPLHFAAAKGHNEIVGLLLENGADVNSRNYCGQTALMQACRYGHWEVVQTLLLFRCNVTRADYLAGRTALHFAAVNGHARCIRLVLADFLPSDKLNSLPETGVVTAKNKSEQSALSKFVNKAADGGITALHMAALNGLFDCVQLLLDLEANVSAVTFHYGTSMDMIGAGSTPLHYAACGGNLKCCQILLARGARKMTLNCNGWLPIDIARMWSRHWLEPLLSPNSDVVIPAFPHSNYLSLPLLSILNIAREFGLQSATIGDEVDICAVCLERTCTVAAEGCEHQLCVRCALYLCSSSNVPSVTVGPPGSIPCPLCRHGITAFKRLPSSLTREMKLPMSLGFCAPCMLHTGDTTDQSSPTCPPTEQRSSKTRAASVSSDIFCPVTCSPFPSVNIPMCTCNEGTCPNFETHGTERHSEEHVESSPSRTTTEQEKIEEGQRLGKTTTCSSMFWGRRSCSRENQCNSEINA</sequence>
<organism>
    <name type="scientific">Arabidopsis thaliana</name>
    <name type="common">Mouse-ear cress</name>
    <dbReference type="NCBI Taxonomy" id="3702"/>
    <lineage>
        <taxon>Eukaryota</taxon>
        <taxon>Viridiplantae</taxon>
        <taxon>Streptophyta</taxon>
        <taxon>Embryophyta</taxon>
        <taxon>Tracheophyta</taxon>
        <taxon>Spermatophyta</taxon>
        <taxon>Magnoliopsida</taxon>
        <taxon>eudicotyledons</taxon>
        <taxon>Gunneridae</taxon>
        <taxon>Pentapetalae</taxon>
        <taxon>rosids</taxon>
        <taxon>malvids</taxon>
        <taxon>Brassicales</taxon>
        <taxon>Brassicaceae</taxon>
        <taxon>Camelineae</taxon>
        <taxon>Arabidopsis</taxon>
    </lineage>
</organism>
<accession>Q4FE45</accession>
<accession>Q9LYN9</accession>
<reference key="1">
    <citation type="journal article" date="2005" name="Plant Physiol.">
        <title>Functional analysis of the RING-type ubiquitin ligase family of Arabidopsis.</title>
        <authorList>
            <person name="Stone S.L."/>
            <person name="Hauksdottir H."/>
            <person name="Troy A."/>
            <person name="Herschleb J."/>
            <person name="Kraft E."/>
            <person name="Callis J."/>
        </authorList>
    </citation>
    <scope>NUCLEOTIDE SEQUENCE [MRNA]</scope>
    <scope>FUNCTION</scope>
    <source>
        <strain>cv. Columbia</strain>
        <tissue>Seedling</tissue>
    </source>
</reference>
<reference key="2">
    <citation type="journal article" date="2000" name="Nature">
        <title>Sequence and analysis of chromosome 5 of the plant Arabidopsis thaliana.</title>
        <authorList>
            <person name="Tabata S."/>
            <person name="Kaneko T."/>
            <person name="Nakamura Y."/>
            <person name="Kotani H."/>
            <person name="Kato T."/>
            <person name="Asamizu E."/>
            <person name="Miyajima N."/>
            <person name="Sasamoto S."/>
            <person name="Kimura T."/>
            <person name="Hosouchi T."/>
            <person name="Kawashima K."/>
            <person name="Kohara M."/>
            <person name="Matsumoto M."/>
            <person name="Matsuno A."/>
            <person name="Muraki A."/>
            <person name="Nakayama S."/>
            <person name="Nakazaki N."/>
            <person name="Naruo K."/>
            <person name="Okumura S."/>
            <person name="Shinpo S."/>
            <person name="Takeuchi C."/>
            <person name="Wada T."/>
            <person name="Watanabe A."/>
            <person name="Yamada M."/>
            <person name="Yasuda M."/>
            <person name="Sato S."/>
            <person name="de la Bastide M."/>
            <person name="Huang E."/>
            <person name="Spiegel L."/>
            <person name="Gnoj L."/>
            <person name="O'Shaughnessy A."/>
            <person name="Preston R."/>
            <person name="Habermann K."/>
            <person name="Murray J."/>
            <person name="Johnson D."/>
            <person name="Rohlfing T."/>
            <person name="Nelson J."/>
            <person name="Stoneking T."/>
            <person name="Pepin K."/>
            <person name="Spieth J."/>
            <person name="Sekhon M."/>
            <person name="Armstrong J."/>
            <person name="Becker M."/>
            <person name="Belter E."/>
            <person name="Cordum H."/>
            <person name="Cordes M."/>
            <person name="Courtney L."/>
            <person name="Courtney W."/>
            <person name="Dante M."/>
            <person name="Du H."/>
            <person name="Edwards J."/>
            <person name="Fryman J."/>
            <person name="Haakensen B."/>
            <person name="Lamar E."/>
            <person name="Latreille P."/>
            <person name="Leonard S."/>
            <person name="Meyer R."/>
            <person name="Mulvaney E."/>
            <person name="Ozersky P."/>
            <person name="Riley A."/>
            <person name="Strowmatt C."/>
            <person name="Wagner-McPherson C."/>
            <person name="Wollam A."/>
            <person name="Yoakum M."/>
            <person name="Bell M."/>
            <person name="Dedhia N."/>
            <person name="Parnell L."/>
            <person name="Shah R."/>
            <person name="Rodriguez M."/>
            <person name="Hoon See L."/>
            <person name="Vil D."/>
            <person name="Baker J."/>
            <person name="Kirchoff K."/>
            <person name="Toth K."/>
            <person name="King L."/>
            <person name="Bahret A."/>
            <person name="Miller B."/>
            <person name="Marra M.A."/>
            <person name="Martienssen R."/>
            <person name="McCombie W.R."/>
            <person name="Wilson R.K."/>
            <person name="Murphy G."/>
            <person name="Bancroft I."/>
            <person name="Volckaert G."/>
            <person name="Wambutt R."/>
            <person name="Duesterhoeft A."/>
            <person name="Stiekema W."/>
            <person name="Pohl T."/>
            <person name="Entian K.-D."/>
            <person name="Terryn N."/>
            <person name="Hartley N."/>
            <person name="Bent E."/>
            <person name="Johnson S."/>
            <person name="Langham S.-A."/>
            <person name="McCullagh B."/>
            <person name="Robben J."/>
            <person name="Grymonprez B."/>
            <person name="Zimmermann W."/>
            <person name="Ramsperger U."/>
            <person name="Wedler H."/>
            <person name="Balke K."/>
            <person name="Wedler E."/>
            <person name="Peters S."/>
            <person name="van Staveren M."/>
            <person name="Dirkse W."/>
            <person name="Mooijman P."/>
            <person name="Klein Lankhorst R."/>
            <person name="Weitzenegger T."/>
            <person name="Bothe G."/>
            <person name="Rose M."/>
            <person name="Hauf J."/>
            <person name="Berneiser S."/>
            <person name="Hempel S."/>
            <person name="Feldpausch M."/>
            <person name="Lamberth S."/>
            <person name="Villarroel R."/>
            <person name="Gielen J."/>
            <person name="Ardiles W."/>
            <person name="Bents O."/>
            <person name="Lemcke K."/>
            <person name="Kolesov G."/>
            <person name="Mayer K.F.X."/>
            <person name="Rudd S."/>
            <person name="Schoof H."/>
            <person name="Schueller C."/>
            <person name="Zaccaria P."/>
            <person name="Mewes H.-W."/>
            <person name="Bevan M."/>
            <person name="Fransz P.F."/>
        </authorList>
    </citation>
    <scope>NUCLEOTIDE SEQUENCE [LARGE SCALE GENOMIC DNA]</scope>
    <source>
        <strain>cv. Columbia</strain>
    </source>
</reference>
<reference key="3">
    <citation type="journal article" date="2017" name="Plant J.">
        <title>Araport11: a complete reannotation of the Arabidopsis thaliana reference genome.</title>
        <authorList>
            <person name="Cheng C.Y."/>
            <person name="Krishnakumar V."/>
            <person name="Chan A.P."/>
            <person name="Thibaud-Nissen F."/>
            <person name="Schobel S."/>
            <person name="Town C.D."/>
        </authorList>
    </citation>
    <scope>GENOME REANNOTATION</scope>
    <source>
        <strain>cv. Columbia</strain>
    </source>
</reference>
<reference key="4">
    <citation type="submission" date="2006-11" db="EMBL/GenBank/DDBJ databases">
        <title>Arabidopsis ORF Clones.</title>
        <authorList>
            <person name="Bautista V.R."/>
            <person name="Kim C.J."/>
            <person name="Chen H."/>
            <person name="Quinitio C."/>
            <person name="Ecker J.R."/>
        </authorList>
    </citation>
    <scope>NUCLEOTIDE SEQUENCE [LARGE SCALE MRNA]</scope>
    <source>
        <strain>cv. Columbia</strain>
    </source>
</reference>
<comment type="function">
    <text evidence="3">Possesses E3 ubiquitin-protein ligase activity when associated with the E2 enzyme UBC8 in vitro.</text>
</comment>
<comment type="catalytic activity">
    <reaction>
        <text>S-ubiquitinyl-[E2 ubiquitin-conjugating enzyme]-L-cysteine + [acceptor protein]-L-lysine = [E2 ubiquitin-conjugating enzyme]-L-cysteine + N(6)-ubiquitinyl-[acceptor protein]-L-lysine.</text>
        <dbReference type="EC" id="2.3.2.27"/>
    </reaction>
</comment>
<comment type="pathway">
    <text>Protein modification; protein ubiquitination.</text>
</comment>
<comment type="sequence caution" evidence="4">
    <conflict type="erroneous gene model prediction">
        <sequence resource="EMBL-CDS" id="CAB87283"/>
    </conflict>
</comment>